<organism>
    <name type="scientific">Picrophilus torridus (strain ATCC 700027 / DSM 9790 / JCM 10055 / NBRC 100828 / KAW 2/3)</name>
    <dbReference type="NCBI Taxonomy" id="1122961"/>
    <lineage>
        <taxon>Archaea</taxon>
        <taxon>Methanobacteriati</taxon>
        <taxon>Thermoplasmatota</taxon>
        <taxon>Thermoplasmata</taxon>
        <taxon>Thermoplasmatales</taxon>
        <taxon>Picrophilaceae</taxon>
        <taxon>Picrophilus</taxon>
    </lineage>
</organism>
<reference key="1">
    <citation type="journal article" date="2004" name="Proc. Natl. Acad. Sci. U.S.A.">
        <title>Genome sequence of Picrophilus torridus and its implications for life around pH 0.</title>
        <authorList>
            <person name="Fuetterer O."/>
            <person name="Angelov A."/>
            <person name="Liesegang H."/>
            <person name="Gottschalk G."/>
            <person name="Schleper C."/>
            <person name="Schepers B."/>
            <person name="Dock C."/>
            <person name="Antranikian G."/>
            <person name="Liebl W."/>
        </authorList>
    </citation>
    <scope>NUCLEOTIDE SEQUENCE [LARGE SCALE GENOMIC DNA]</scope>
    <source>
        <strain evidence="7">ATCC 700027 / DSM 9790 / JCM 10055 / NBRC 100828 / KAW 2/3</strain>
    </source>
</reference>
<reference key="2">
    <citation type="journal article" date="2015" name="Appl. Environ. Microbiol.">
        <title>The Putative mevalonate diphosphate decarboxylase from Picrophilus torridus is in reality a mevalonate-3-kinase with high potential for bioproduction of isobutene.</title>
        <authorList>
            <person name="Rossoni L."/>
            <person name="Hall S.J."/>
            <person name="Eastham G."/>
            <person name="Licence P."/>
            <person name="Stephens G."/>
        </authorList>
    </citation>
    <scope>FUNCTION</scope>
    <scope>CATALYTIC ACTIVITY</scope>
    <scope>BIOPHYSICOCHEMICAL PROPERTIES</scope>
    <scope>SUBSTRATE SPECIFICITY</scope>
    <scope>PATHWAY</scope>
</reference>
<comment type="function">
    <text evidence="2">Catalyzes the phosphorylation of mevalonate (MVA) to yield mevalonate-3-phosphate. Functions in an alternative mevalonate pathway, which passes through mevalonate 3-phosphate rather than mevalonate 5-phosphate. Also able to catalyze the formation of isobutene via the conversion of 3-hydroxyisovalerate (3-HIV) to an unstable 3-phosphate intermediate that undergoes a spontaneous decarboxylation.</text>
</comment>
<comment type="catalytic activity">
    <reaction evidence="2">
        <text>(R)-mevalonate + ATP = (R)-3-phosphomevalonate + ADP + H(+)</text>
        <dbReference type="Rhea" id="RHEA:42884"/>
        <dbReference type="ChEBI" id="CHEBI:15378"/>
        <dbReference type="ChEBI" id="CHEBI:30616"/>
        <dbReference type="ChEBI" id="CHEBI:36464"/>
        <dbReference type="ChEBI" id="CHEBI:82773"/>
        <dbReference type="ChEBI" id="CHEBI:456216"/>
        <dbReference type="EC" id="2.7.1.185"/>
    </reaction>
</comment>
<comment type="biophysicochemical properties">
    <kinetics>
        <KM evidence="2">23 uM for ATP</KM>
        <KM evidence="2">131 uM for mevalonate</KM>
        <KM evidence="2">2348 uM for 3-hydroxyisovalerate (3-HIV)</KM>
        <KM evidence="2">3163 uM for 3-hydroxybutyrate (3-HB)</KM>
        <text evidence="2">kcat is 1.9 sec(-1) for mevalonate as substrate. kcat is 0.1 sec(-1) for 3-hydroxyisovalerate (3-HIV) as substrate. kcat is 0.1 sec(-1) for 3-hydroxybutyrate (3-HB) as substrate.</text>
    </kinetics>
</comment>
<comment type="pathway">
    <text evidence="5">Isoprenoid biosynthesis; isopentenyl diphosphate biosynthesis via mevalonate pathway.</text>
</comment>
<comment type="subunit">
    <text evidence="1">Homodimer.</text>
</comment>
<comment type="similarity">
    <text evidence="4">Belongs to the GHMP kinase family.</text>
</comment>
<sequence length="324" mass="36791">MENYNVKTRAFPTIGIILLGGISDKKNRIPLHTTAGIAYTGINNDVYTETKLYVSKDEKCYIDGKEIDLNSDRSPSKVIDKFKHEILMRVNLDDENNLSIDSRNFNILSGSSDSGAAALGECIESIFEYNINIFTFENDLQRISESVGRSLYGGLTVNYANGRESLTEPLLEPEAFNNFTIIGAHFNIDRKPSNEIHENIIKHENYRERIKSAERKAKKLEELSRNANIKGIFELAESDTVEYHKMLHDVGVDIINDRMENLIERVKEMKNNFWNSYIVTGGPNVFVITEKKDVDKAMEGLNDLCDDIRLLKVAGKPQVISKNF</sequence>
<proteinExistence type="evidence at protein level"/>
<keyword id="KW-0067">ATP-binding</keyword>
<keyword id="KW-0414">Isoprene biosynthesis</keyword>
<keyword id="KW-0418">Kinase</keyword>
<keyword id="KW-0547">Nucleotide-binding</keyword>
<keyword id="KW-0808">Transferase</keyword>
<protein>
    <recommendedName>
        <fullName evidence="3">Mevalonate-3-kinase</fullName>
        <shortName evidence="3">M3K</shortName>
        <ecNumber evidence="2">2.7.1.185</ecNumber>
    </recommendedName>
    <alternativeName>
        <fullName evidence="1">ATP:(R)-mevalonate 3-phosphotransferase</fullName>
        <shortName evidence="1">ATP:(R)-MVA 3 phosphotransferase</shortName>
    </alternativeName>
</protein>
<accession>Q6KZB1</accession>
<feature type="chain" id="PRO_0000439671" description="Mevalonate-3-kinase">
    <location>
        <begin position="1"/>
        <end position="324"/>
    </location>
</feature>
<feature type="binding site" evidence="1">
    <location>
        <position position="19"/>
    </location>
    <ligand>
        <name>substrate</name>
    </ligand>
</feature>
<feature type="binding site" evidence="1">
    <location>
        <begin position="109"/>
        <end position="112"/>
    </location>
    <ligand>
        <name>ATP</name>
        <dbReference type="ChEBI" id="CHEBI:30616"/>
    </ligand>
</feature>
<feature type="binding site" evidence="1">
    <location>
        <position position="145"/>
    </location>
    <ligand>
        <name>substrate</name>
    </ligand>
</feature>
<feature type="binding site" evidence="1">
    <location>
        <position position="149"/>
    </location>
    <ligand>
        <name>substrate</name>
    </ligand>
</feature>
<feature type="binding site" evidence="1">
    <location>
        <position position="190"/>
    </location>
    <ligand>
        <name>ATP</name>
        <dbReference type="ChEBI" id="CHEBI:30616"/>
    </ligand>
</feature>
<feature type="binding site" evidence="1">
    <location>
        <position position="193"/>
    </location>
    <ligand>
        <name>ATP</name>
        <dbReference type="ChEBI" id="CHEBI:30616"/>
    </ligand>
</feature>
<dbReference type="EC" id="2.7.1.185" evidence="2"/>
<dbReference type="EMBL" id="AE017261">
    <property type="protein sequence ID" value="AAT43941.1"/>
    <property type="molecule type" value="Genomic_DNA"/>
</dbReference>
<dbReference type="RefSeq" id="WP_011178157.1">
    <property type="nucleotide sequence ID" value="NC_005877.1"/>
</dbReference>
<dbReference type="SMR" id="Q6KZB1"/>
<dbReference type="FunCoup" id="Q6KZB1">
    <property type="interactions" value="67"/>
</dbReference>
<dbReference type="STRING" id="263820.PTO1356"/>
<dbReference type="PaxDb" id="263820-PTO1356"/>
<dbReference type="GeneID" id="2845209"/>
<dbReference type="KEGG" id="pto:PTO1356"/>
<dbReference type="eggNOG" id="arCOG02937">
    <property type="taxonomic scope" value="Archaea"/>
</dbReference>
<dbReference type="HOGENOM" id="CLU_862228_0_0_2"/>
<dbReference type="InParanoid" id="Q6KZB1"/>
<dbReference type="OrthoDB" id="275333at2157"/>
<dbReference type="BRENDA" id="2.7.1.185">
    <property type="organism ID" value="7518"/>
</dbReference>
<dbReference type="UniPathway" id="UPA00057"/>
<dbReference type="Proteomes" id="UP000000438">
    <property type="component" value="Chromosome"/>
</dbReference>
<dbReference type="GO" id="GO:0005524">
    <property type="term" value="F:ATP binding"/>
    <property type="evidence" value="ECO:0007669"/>
    <property type="project" value="UniProtKB-KW"/>
</dbReference>
<dbReference type="GO" id="GO:0016301">
    <property type="term" value="F:kinase activity"/>
    <property type="evidence" value="ECO:0007669"/>
    <property type="project" value="UniProtKB-KW"/>
</dbReference>
<dbReference type="GO" id="GO:0019287">
    <property type="term" value="P:isopentenyl diphosphate biosynthetic process, mevalonate pathway"/>
    <property type="evidence" value="ECO:0007669"/>
    <property type="project" value="UniProtKB-UniPathway"/>
</dbReference>
<dbReference type="Gene3D" id="3.30.230.10">
    <property type="match status" value="1"/>
</dbReference>
<dbReference type="Gene3D" id="3.30.70.890">
    <property type="entry name" value="GHMP kinase, C-terminal domain"/>
    <property type="match status" value="1"/>
</dbReference>
<dbReference type="InterPro" id="IPR036554">
    <property type="entry name" value="GHMP_kinase_C_sf"/>
</dbReference>
<dbReference type="InterPro" id="IPR048471">
    <property type="entry name" value="M3K"/>
</dbReference>
<dbReference type="InterPro" id="IPR048470">
    <property type="entry name" value="M3K_C"/>
</dbReference>
<dbReference type="InterPro" id="IPR053859">
    <property type="entry name" value="MVD-like_N"/>
</dbReference>
<dbReference type="InterPro" id="IPR020568">
    <property type="entry name" value="Ribosomal_Su5_D2-typ_SF"/>
</dbReference>
<dbReference type="InterPro" id="IPR014721">
    <property type="entry name" value="Ribsml_uS5_D2-typ_fold_subgr"/>
</dbReference>
<dbReference type="NCBIfam" id="NF040848">
    <property type="entry name" value="mev_kinase"/>
    <property type="match status" value="1"/>
</dbReference>
<dbReference type="PANTHER" id="PTHR10977">
    <property type="entry name" value="DIPHOSPHOMEVALONATE DECARBOXYLASE"/>
    <property type="match status" value="1"/>
</dbReference>
<dbReference type="PANTHER" id="PTHR10977:SF3">
    <property type="entry name" value="DIPHOSPHOMEVALONATE DECARBOXYLASE"/>
    <property type="match status" value="1"/>
</dbReference>
<dbReference type="Pfam" id="PF21433">
    <property type="entry name" value="M3K_C"/>
    <property type="match status" value="1"/>
</dbReference>
<dbReference type="Pfam" id="PF22700">
    <property type="entry name" value="MVD-like_N"/>
    <property type="match status" value="1"/>
</dbReference>
<dbReference type="SUPFAM" id="SSF55060">
    <property type="entry name" value="GHMP Kinase, C-terminal domain"/>
    <property type="match status" value="1"/>
</dbReference>
<dbReference type="SUPFAM" id="SSF54211">
    <property type="entry name" value="Ribosomal protein S5 domain 2-like"/>
    <property type="match status" value="1"/>
</dbReference>
<gene>
    <name evidence="6" type="ordered locus">PTO1356</name>
</gene>
<evidence type="ECO:0000250" key="1">
    <source>
        <dbReference type="UniProtKB" id="Q9HIN1"/>
    </source>
</evidence>
<evidence type="ECO:0000269" key="2">
    <source>
    </source>
</evidence>
<evidence type="ECO:0000303" key="3">
    <source>
    </source>
</evidence>
<evidence type="ECO:0000305" key="4"/>
<evidence type="ECO:0000305" key="5">
    <source>
    </source>
</evidence>
<evidence type="ECO:0000312" key="6">
    <source>
        <dbReference type="EMBL" id="AAT43941.1"/>
    </source>
</evidence>
<evidence type="ECO:0000312" key="7">
    <source>
        <dbReference type="Proteomes" id="UP000000438"/>
    </source>
</evidence>
<name>MV3K_PICTO</name>